<accession>P0C530</accession>
<proteinExistence type="inferred from homology"/>
<name>NS3B_BC133</name>
<dbReference type="EMBL" id="DQ648794">
    <property type="status" value="NOT_ANNOTATED_CDS"/>
    <property type="molecule type" value="Genomic_RNA"/>
</dbReference>
<dbReference type="SMR" id="P0C530"/>
<dbReference type="Proteomes" id="UP000007449">
    <property type="component" value="Genome"/>
</dbReference>
<dbReference type="GO" id="GO:0033650">
    <property type="term" value="C:host cell mitochondrion"/>
    <property type="evidence" value="ECO:0007669"/>
    <property type="project" value="UniProtKB-SubCell"/>
</dbReference>
<dbReference type="GO" id="GO:0044196">
    <property type="term" value="C:host cell nucleolus"/>
    <property type="evidence" value="ECO:0007669"/>
    <property type="project" value="UniProtKB-SubCell"/>
</dbReference>
<dbReference type="GO" id="GO:0003723">
    <property type="term" value="F:RNA binding"/>
    <property type="evidence" value="ECO:0007669"/>
    <property type="project" value="UniProtKB-KW"/>
</dbReference>
<dbReference type="GO" id="GO:0052150">
    <property type="term" value="P:symbiont-mediated perturbation of host apoptosis"/>
    <property type="evidence" value="ECO:0007669"/>
    <property type="project" value="UniProtKB-KW"/>
</dbReference>
<dbReference type="GO" id="GO:0039646">
    <property type="term" value="P:symbiont-mediated perturbation of host cell cycle G0/G1 transition checkpoint"/>
    <property type="evidence" value="ECO:0007669"/>
    <property type="project" value="UniProtKB-KW"/>
</dbReference>
<dbReference type="GO" id="GO:0044071">
    <property type="term" value="P:symbiont-mediated perturbation of host cell cycle progression"/>
    <property type="evidence" value="ECO:0007669"/>
    <property type="project" value="UniProtKB-KW"/>
</dbReference>
<dbReference type="CDD" id="cd00048">
    <property type="entry name" value="DSRM_SF"/>
    <property type="match status" value="1"/>
</dbReference>
<dbReference type="Gene3D" id="3.30.160.20">
    <property type="match status" value="1"/>
</dbReference>
<dbReference type="InterPro" id="IPR014720">
    <property type="entry name" value="dsRBD_dom"/>
</dbReference>
<dbReference type="Pfam" id="PF00035">
    <property type="entry name" value="dsrm"/>
    <property type="match status" value="1"/>
</dbReference>
<dbReference type="SUPFAM" id="SSF54768">
    <property type="entry name" value="dsRNA-binding domain-like"/>
    <property type="match status" value="1"/>
</dbReference>
<organismHost>
    <name type="scientific">Tylonycteris pachypus</name>
    <name type="common">Lesser bamboo bat</name>
    <name type="synonym">Vespertilio pachypus</name>
    <dbReference type="NCBI Taxonomy" id="258959"/>
</organismHost>
<evidence type="ECO:0000250" key="1">
    <source>
        <dbReference type="UniProtKB" id="P59633"/>
    </source>
</evidence>
<protein>
    <recommendedName>
        <fullName>Non-structural protein 3b</fullName>
        <shortName>ns3b</shortName>
    </recommendedName>
    <alternativeName>
        <fullName>Accessory protein 3b</fullName>
    </alternativeName>
</protein>
<comment type="function">
    <text evidence="1">Induces host cell G0/G1 arrest and apoptosis.</text>
</comment>
<comment type="subunit">
    <text evidence="1">Interacts with host RUNX1 isoform b.</text>
</comment>
<comment type="subcellular location">
    <subcellularLocation>
        <location evidence="1">Host nucleus</location>
        <location evidence="1">Host nucleolus</location>
    </subcellularLocation>
    <subcellularLocation>
        <location evidence="1">Host mitochondrion</location>
    </subcellularLocation>
</comment>
<sequence>MDYVSLLNQFWQKQIKSYKETPSQYHYLYPPRFFYKPVLGNLQHPTKWCCTIKFYEYSAQATECTKASAKQDAARLICEQLQAAGLLNGMELRFRSSASDIFGQNRYDASKSYFFSKTA</sequence>
<keyword id="KW-0053">Apoptosis</keyword>
<keyword id="KW-1077">G0/G1 host cell cycle checkpoint dysregulation by virus</keyword>
<keyword id="KW-1045">Host mitochondrion</keyword>
<keyword id="KW-1048">Host nucleus</keyword>
<keyword id="KW-0945">Host-virus interaction</keyword>
<keyword id="KW-1119">Modulation of host cell apoptosis by virus</keyword>
<keyword id="KW-1121">Modulation of host cell cycle by virus</keyword>
<keyword id="KW-0694">RNA-binding</keyword>
<gene>
    <name type="ORF">3b</name>
</gene>
<feature type="chain" id="PRO_0000290264" description="Non-structural protein 3b">
    <location>
        <begin position="1"/>
        <end position="119"/>
    </location>
</feature>
<feature type="domain" description="DRBM">
    <location>
        <begin position="2"/>
        <end position="83"/>
    </location>
</feature>
<organism>
    <name type="scientific">Bat coronavirus 133/2005</name>
    <name type="common">BtCoV</name>
    <name type="synonym">BtCoV/133/2005</name>
    <dbReference type="NCBI Taxonomy" id="389230"/>
    <lineage>
        <taxon>Viruses</taxon>
        <taxon>Riboviria</taxon>
        <taxon>Orthornavirae</taxon>
        <taxon>Pisuviricota</taxon>
        <taxon>Pisoniviricetes</taxon>
        <taxon>Nidovirales</taxon>
        <taxon>Cornidovirineae</taxon>
        <taxon>Coronaviridae</taxon>
        <taxon>Orthocoronavirinae</taxon>
        <taxon>Betacoronavirus</taxon>
        <taxon>Merbecovirus</taxon>
        <taxon>Bat coronavirus HKU4</taxon>
    </lineage>
</organism>
<reference key="1">
    <citation type="journal article" date="2006" name="J. Virol.">
        <title>Prevalence and genetic diversity of coronaviruses in bats from China.</title>
        <authorList>
            <person name="Tang X.C."/>
            <person name="Zhang J.X."/>
            <person name="Zhang S.Y."/>
            <person name="Wang P."/>
            <person name="Fan X.H."/>
            <person name="Li L.F."/>
            <person name="Li G."/>
            <person name="Dong B.Q."/>
            <person name="Liu W."/>
            <person name="Cheung C.L."/>
            <person name="Xu K.M."/>
            <person name="Song W.J."/>
            <person name="Vijaykrishna D."/>
            <person name="Poon L.L.M."/>
            <person name="Peiris J.S.M."/>
            <person name="Smith G.J."/>
            <person name="Chen H."/>
            <person name="Guan Y."/>
        </authorList>
    </citation>
    <scope>NUCLEOTIDE SEQUENCE [GENOMIC RNA]</scope>
</reference>